<protein>
    <recommendedName>
        <fullName evidence="2">Histidinol-phosphate aminotransferase MT2290</fullName>
        <shortName evidence="2">HspAT</shortName>
        <ecNumber evidence="2">2.6.1.9</ecNumber>
    </recommendedName>
</protein>
<sequence>MLWILGPHTGPLLFDAVASLDTSPLAAARYHGDQDVAPGVLDFAVNVRHDRPPEWLVRQLAALLPELARYPSTDDVHRAQDAVAERHGRTRDEVLPLVGAAEGFALLHNLSPVRAAIVVPAFTEPAIALSAAGITAHHVVLKPPFVLDTAHVPDDADLVVVGNPTNPTSVLHLREQLLELRRPGRILVVDEAFADWVPGEPQSLADDSLPDVLVLRSLTKTWSLAGLRVGYALGSPDVLARLTVQRAHWPLGTLQLTAIAACCAPRAVAAAAADAVRLTALRAEMVAGLRSVGAEVVDGAAPFVLFNIADADGLRNYLQSKGIAVRRGDTFVGLDARYLRAAVRPEWPVLVAAIAEWAKRGGRR</sequence>
<reference key="1">
    <citation type="journal article" date="2002" name="J. Bacteriol.">
        <title>Whole-genome comparison of Mycobacterium tuberculosis clinical and laboratory strains.</title>
        <authorList>
            <person name="Fleischmann R.D."/>
            <person name="Alland D."/>
            <person name="Eisen J.A."/>
            <person name="Carpenter L."/>
            <person name="White O."/>
            <person name="Peterson J.D."/>
            <person name="DeBoy R.T."/>
            <person name="Dodson R.J."/>
            <person name="Gwinn M.L."/>
            <person name="Haft D.H."/>
            <person name="Hickey E.K."/>
            <person name="Kolonay J.F."/>
            <person name="Nelson W.C."/>
            <person name="Umayam L.A."/>
            <person name="Ermolaeva M.D."/>
            <person name="Salzberg S.L."/>
            <person name="Delcher A."/>
            <person name="Utterback T.R."/>
            <person name="Weidman J.F."/>
            <person name="Khouri H.M."/>
            <person name="Gill J."/>
            <person name="Mikula A."/>
            <person name="Bishai W."/>
            <person name="Jacobs W.R. Jr."/>
            <person name="Venter J.C."/>
            <person name="Fraser C.M."/>
        </authorList>
    </citation>
    <scope>NUCLEOTIDE SEQUENCE [LARGE SCALE GENOMIC DNA]</scope>
    <source>
        <strain>CDC 1551 / Oshkosh</strain>
    </source>
</reference>
<organism>
    <name type="scientific">Mycobacterium tuberculosis (strain CDC 1551 / Oshkosh)</name>
    <dbReference type="NCBI Taxonomy" id="83331"/>
    <lineage>
        <taxon>Bacteria</taxon>
        <taxon>Bacillati</taxon>
        <taxon>Actinomycetota</taxon>
        <taxon>Actinomycetes</taxon>
        <taxon>Mycobacteriales</taxon>
        <taxon>Mycobacteriaceae</taxon>
        <taxon>Mycobacterium</taxon>
        <taxon>Mycobacterium tuberculosis complex</taxon>
    </lineage>
</organism>
<keyword id="KW-0032">Aminotransferase</keyword>
<keyword id="KW-0134">Cell wall</keyword>
<keyword id="KW-0663">Pyridoxal phosphate</keyword>
<keyword id="KW-1185">Reference proteome</keyword>
<keyword id="KW-0964">Secreted</keyword>
<keyword id="KW-0808">Transferase</keyword>
<evidence type="ECO:0000250" key="1">
    <source>
        <dbReference type="UniProtKB" id="P9WML5"/>
    </source>
</evidence>
<evidence type="ECO:0000250" key="2">
    <source>
        <dbReference type="UniProtKB" id="P9WQ89"/>
    </source>
</evidence>
<evidence type="ECO:0000305" key="3"/>
<proteinExistence type="inferred from homology"/>
<gene>
    <name type="ordered locus">MT2290</name>
</gene>
<comment type="function">
    <text evidence="2">Aminotransferase that catalyzes the conversion of histidinol phosphate and 2-oxoglutarate into L-glutamate and imidazole acetol phosphate. Might play a significant role in mediating histidine biosynthesis during infection. Facilitates mycobacterial survival and virulence in macrophages.</text>
</comment>
<comment type="catalytic activity">
    <reaction evidence="2">
        <text>L-histidinol phosphate + 2-oxoglutarate = 3-(imidazol-4-yl)-2-oxopropyl phosphate + L-glutamate</text>
        <dbReference type="Rhea" id="RHEA:23744"/>
        <dbReference type="ChEBI" id="CHEBI:16810"/>
        <dbReference type="ChEBI" id="CHEBI:29985"/>
        <dbReference type="ChEBI" id="CHEBI:57766"/>
        <dbReference type="ChEBI" id="CHEBI:57980"/>
        <dbReference type="EC" id="2.6.1.9"/>
    </reaction>
</comment>
<comment type="cofactor">
    <cofactor evidence="2">
        <name>pyridoxal 5'-phosphate</name>
        <dbReference type="ChEBI" id="CHEBI:597326"/>
    </cofactor>
</comment>
<comment type="subunit">
    <text evidence="2">Monomer.</text>
</comment>
<comment type="subcellular location">
    <subcellularLocation>
        <location evidence="2">Secreted</location>
    </subcellularLocation>
    <subcellularLocation>
        <location evidence="2">Secreted</location>
        <location evidence="2">Cell wall</location>
    </subcellularLocation>
</comment>
<comment type="similarity">
    <text evidence="3">Belongs to the class-I pyridoxal-phosphate-dependent aminotransferase family.</text>
</comment>
<comment type="sequence caution" evidence="3">
    <conflict type="erroneous initiation">
        <sequence resource="EMBL-CDS" id="AAK46574"/>
    </conflict>
    <text>Truncated N-terminus.</text>
</comment>
<dbReference type="EC" id="2.6.1.9" evidence="2"/>
<dbReference type="EMBL" id="AE000516">
    <property type="protein sequence ID" value="AAK46574.1"/>
    <property type="status" value="ALT_INIT"/>
    <property type="molecule type" value="Genomic_DNA"/>
</dbReference>
<dbReference type="PIR" id="C70777">
    <property type="entry name" value="C70777"/>
</dbReference>
<dbReference type="SMR" id="P9WQ88"/>
<dbReference type="KEGG" id="mtc:MT2290"/>
<dbReference type="PATRIC" id="fig|83331.31.peg.2465"/>
<dbReference type="HOGENOM" id="CLU_017584_3_2_11"/>
<dbReference type="Proteomes" id="UP000001020">
    <property type="component" value="Chromosome"/>
</dbReference>
<dbReference type="GO" id="GO:0005576">
    <property type="term" value="C:extracellular region"/>
    <property type="evidence" value="ECO:0007669"/>
    <property type="project" value="UniProtKB-SubCell"/>
</dbReference>
<dbReference type="GO" id="GO:0004400">
    <property type="term" value="F:histidinol-phosphate transaminase activity"/>
    <property type="evidence" value="ECO:0007669"/>
    <property type="project" value="RHEA"/>
</dbReference>
<dbReference type="GO" id="GO:0030170">
    <property type="term" value="F:pyridoxal phosphate binding"/>
    <property type="evidence" value="ECO:0007669"/>
    <property type="project" value="InterPro"/>
</dbReference>
<dbReference type="GO" id="GO:0009058">
    <property type="term" value="P:biosynthetic process"/>
    <property type="evidence" value="ECO:0007669"/>
    <property type="project" value="InterPro"/>
</dbReference>
<dbReference type="CDD" id="cd00609">
    <property type="entry name" value="AAT_like"/>
    <property type="match status" value="1"/>
</dbReference>
<dbReference type="Gene3D" id="3.90.1150.10">
    <property type="entry name" value="Aspartate Aminotransferase, domain 1"/>
    <property type="match status" value="1"/>
</dbReference>
<dbReference type="Gene3D" id="3.40.640.10">
    <property type="entry name" value="Type I PLP-dependent aspartate aminotransferase-like (Major domain)"/>
    <property type="match status" value="1"/>
</dbReference>
<dbReference type="InterPro" id="IPR004839">
    <property type="entry name" value="Aminotransferase_I/II_large"/>
</dbReference>
<dbReference type="InterPro" id="IPR004838">
    <property type="entry name" value="NHTrfase_class1_PyrdxlP-BS"/>
</dbReference>
<dbReference type="InterPro" id="IPR015424">
    <property type="entry name" value="PyrdxlP-dep_Trfase"/>
</dbReference>
<dbReference type="InterPro" id="IPR015421">
    <property type="entry name" value="PyrdxlP-dep_Trfase_major"/>
</dbReference>
<dbReference type="InterPro" id="IPR015422">
    <property type="entry name" value="PyrdxlP-dep_Trfase_small"/>
</dbReference>
<dbReference type="NCBIfam" id="NF005915">
    <property type="entry name" value="PRK07908.1"/>
    <property type="match status" value="1"/>
</dbReference>
<dbReference type="PANTHER" id="PTHR42885">
    <property type="entry name" value="HISTIDINOL-PHOSPHATE AMINOTRANSFERASE-RELATED"/>
    <property type="match status" value="1"/>
</dbReference>
<dbReference type="PANTHER" id="PTHR42885:SF1">
    <property type="entry name" value="THREONINE-PHOSPHATE DECARBOXYLASE"/>
    <property type="match status" value="1"/>
</dbReference>
<dbReference type="Pfam" id="PF00155">
    <property type="entry name" value="Aminotran_1_2"/>
    <property type="match status" value="1"/>
</dbReference>
<dbReference type="SUPFAM" id="SSF53383">
    <property type="entry name" value="PLP-dependent transferases"/>
    <property type="match status" value="1"/>
</dbReference>
<dbReference type="PROSITE" id="PS00105">
    <property type="entry name" value="AA_TRANSFER_CLASS_1"/>
    <property type="match status" value="1"/>
</dbReference>
<feature type="chain" id="PRO_0000426818" description="Histidinol-phosphate aminotransferase MT2290">
    <location>
        <begin position="1"/>
        <end position="364"/>
    </location>
</feature>
<feature type="modified residue" description="N6-(pyridoxal phosphate)lysine" evidence="1">
    <location>
        <position position="220"/>
    </location>
</feature>
<name>HSPAT_MYCTO</name>
<accession>P9WQ88</accession>
<accession>L0T904</accession>
<accession>P63500</accession>
<accession>Q10503</accession>